<proteinExistence type="evidence at protein level"/>
<name>PRDX1_CRIGR</name>
<comment type="function">
    <text evidence="1 3">Thiol-specific peroxidase that catalyzes the reduction of hydrogen peroxide and organic hydroperoxides to water and alcohols, respectively. Plays a role in cell protection against oxidative stress by detoxifying peroxides and as sensor of hydrogen peroxide-mediated signaling events. Might participate in the signaling cascades of growth factors and tumor necrosis factor-alpha by regulating the intracellular concentrations of H(2)O(2) (By similarity). Reduces an intramolecular disulfide bond in GDPD5 that gates the ability to GDPD5 to drive postmitotic motor neuron differentiation (By similarity).</text>
</comment>
<comment type="catalytic activity">
    <reaction evidence="3">
        <text>a hydroperoxide + [thioredoxin]-dithiol = an alcohol + [thioredoxin]-disulfide + H2O</text>
        <dbReference type="Rhea" id="RHEA:62620"/>
        <dbReference type="Rhea" id="RHEA-COMP:10698"/>
        <dbReference type="Rhea" id="RHEA-COMP:10700"/>
        <dbReference type="ChEBI" id="CHEBI:15377"/>
        <dbReference type="ChEBI" id="CHEBI:29950"/>
        <dbReference type="ChEBI" id="CHEBI:30879"/>
        <dbReference type="ChEBI" id="CHEBI:35924"/>
        <dbReference type="ChEBI" id="CHEBI:50058"/>
        <dbReference type="EC" id="1.11.1.24"/>
    </reaction>
</comment>
<comment type="subunit">
    <text evidence="1 3">Homodimer; disulfide-linked, upon oxidation. 5 homodimers assemble to form a ring-like decamer (By similarity). Interacts with GDPD5; forms a mixed-disulfide with GDPD5 (By similarity). Interacts with SESN1 and SESN2 (By similarity). Interacts with FAM107A (By similarity).</text>
</comment>
<comment type="subcellular location">
    <subcellularLocation>
        <location evidence="3">Cytoplasm</location>
    </subcellularLocation>
</comment>
<comment type="induction">
    <text evidence="6">Up-regulated upon exposure to arsenate.</text>
</comment>
<comment type="PTM">
    <text evidence="3">Phosphorylated on Thr-90 during the M-phase, which leads to a decrease in enzymatic activity.</text>
</comment>
<comment type="PTM">
    <text evidence="3">Acetylation increases reducing activity and resistance to superoxidation. Deacetylated by HDAC6 which decreases reducing activity.</text>
</comment>
<comment type="miscellaneous">
    <text evidence="3">The active site is a conserved redox-active cysteine residue, the peroxidatic cysteine (C(P)), which makes the nucleophilic attack on the peroxide substrate. The peroxide oxidizes the C(P)-SH to cysteine sulfenic acid (C(P)-SOH), which then reacts with another cysteine residue, the resolving cysteine (C(R)), to form a disulfide bridge. The disulfide is subsequently reduced by an appropriate electron donor to complete the catalytic cycle. In this typical 2-Cys peroxiredoxin, C(R) is provided by the other dimeric subunit to form an intersubunit disulfide. The disulfide is subsequently reduced by thioredoxin.</text>
</comment>
<comment type="similarity">
    <text evidence="7">Belongs to the peroxiredoxin family. AhpC/Prx1 subfamily.</text>
</comment>
<dbReference type="EC" id="1.11.1.24" evidence="3"/>
<dbReference type="EMBL" id="AF221841">
    <property type="protein sequence ID" value="AAF32369.1"/>
    <property type="molecule type" value="mRNA"/>
</dbReference>
<dbReference type="RefSeq" id="NP_001233694.1">
    <property type="nucleotide sequence ID" value="NM_001246765.1"/>
</dbReference>
<dbReference type="SMR" id="Q9JKY1"/>
<dbReference type="BioGRID" id="1613917">
    <property type="interactions" value="1"/>
</dbReference>
<dbReference type="PaxDb" id="10029-NP_001233694.1"/>
<dbReference type="Ensembl" id="ENSCGRT00001024706.1">
    <property type="protein sequence ID" value="ENSCGRP00001020462.1"/>
    <property type="gene ID" value="ENSCGRG00001019611.1"/>
</dbReference>
<dbReference type="GeneID" id="100689332"/>
<dbReference type="KEGG" id="cge:100689332"/>
<dbReference type="CTD" id="5052"/>
<dbReference type="eggNOG" id="KOG0852">
    <property type="taxonomic scope" value="Eukaryota"/>
</dbReference>
<dbReference type="GeneTree" id="ENSGT00940000154277"/>
<dbReference type="OrthoDB" id="185659at2759"/>
<dbReference type="Proteomes" id="UP000694386">
    <property type="component" value="Unplaced"/>
</dbReference>
<dbReference type="Proteomes" id="UP001108280">
    <property type="component" value="Chromosome 2"/>
</dbReference>
<dbReference type="GO" id="GO:0005829">
    <property type="term" value="C:cytosol"/>
    <property type="evidence" value="ECO:0007669"/>
    <property type="project" value="TreeGrafter"/>
</dbReference>
<dbReference type="GO" id="GO:0008379">
    <property type="term" value="F:thioredoxin peroxidase activity"/>
    <property type="evidence" value="ECO:0007669"/>
    <property type="project" value="TreeGrafter"/>
</dbReference>
<dbReference type="GO" id="GO:0045454">
    <property type="term" value="P:cell redox homeostasis"/>
    <property type="evidence" value="ECO:0007669"/>
    <property type="project" value="TreeGrafter"/>
</dbReference>
<dbReference type="GO" id="GO:0042744">
    <property type="term" value="P:hydrogen peroxide catabolic process"/>
    <property type="evidence" value="ECO:0007669"/>
    <property type="project" value="TreeGrafter"/>
</dbReference>
<dbReference type="GO" id="GO:0045321">
    <property type="term" value="P:leukocyte activation"/>
    <property type="evidence" value="ECO:0007669"/>
    <property type="project" value="TreeGrafter"/>
</dbReference>
<dbReference type="GO" id="GO:0019430">
    <property type="term" value="P:removal of superoxide radicals"/>
    <property type="evidence" value="ECO:0007669"/>
    <property type="project" value="TreeGrafter"/>
</dbReference>
<dbReference type="CDD" id="cd03015">
    <property type="entry name" value="PRX_Typ2cys"/>
    <property type="match status" value="1"/>
</dbReference>
<dbReference type="FunFam" id="3.40.30.10:FF:000003">
    <property type="entry name" value="Peroxiredoxin 1"/>
    <property type="match status" value="1"/>
</dbReference>
<dbReference type="Gene3D" id="3.40.30.10">
    <property type="entry name" value="Glutaredoxin"/>
    <property type="match status" value="1"/>
</dbReference>
<dbReference type="InterPro" id="IPR000866">
    <property type="entry name" value="AhpC/TSA"/>
</dbReference>
<dbReference type="InterPro" id="IPR050217">
    <property type="entry name" value="Peroxiredoxin"/>
</dbReference>
<dbReference type="InterPro" id="IPR024706">
    <property type="entry name" value="Peroxiredoxin_AhpC-typ"/>
</dbReference>
<dbReference type="InterPro" id="IPR019479">
    <property type="entry name" value="Peroxiredoxin_C"/>
</dbReference>
<dbReference type="InterPro" id="IPR036249">
    <property type="entry name" value="Thioredoxin-like_sf"/>
</dbReference>
<dbReference type="InterPro" id="IPR013766">
    <property type="entry name" value="Thioredoxin_domain"/>
</dbReference>
<dbReference type="PANTHER" id="PTHR10681:SF111">
    <property type="entry name" value="PEROXIREDOXIN-1"/>
    <property type="match status" value="1"/>
</dbReference>
<dbReference type="PANTHER" id="PTHR10681">
    <property type="entry name" value="THIOREDOXIN PEROXIDASE"/>
    <property type="match status" value="1"/>
</dbReference>
<dbReference type="Pfam" id="PF10417">
    <property type="entry name" value="1-cysPrx_C"/>
    <property type="match status" value="1"/>
</dbReference>
<dbReference type="Pfam" id="PF00578">
    <property type="entry name" value="AhpC-TSA"/>
    <property type="match status" value="1"/>
</dbReference>
<dbReference type="PIRSF" id="PIRSF000239">
    <property type="entry name" value="AHPC"/>
    <property type="match status" value="1"/>
</dbReference>
<dbReference type="SUPFAM" id="SSF52833">
    <property type="entry name" value="Thioredoxin-like"/>
    <property type="match status" value="1"/>
</dbReference>
<dbReference type="PROSITE" id="PS51352">
    <property type="entry name" value="THIOREDOXIN_2"/>
    <property type="match status" value="1"/>
</dbReference>
<protein>
    <recommendedName>
        <fullName>Peroxiredoxin-1</fullName>
        <ecNumber evidence="3">1.11.1.24</ecNumber>
    </recommendedName>
    <alternativeName>
        <fullName>Thioredoxin peroxidase 2</fullName>
        <shortName>TPX-2</shortName>
    </alternativeName>
    <alternativeName>
        <fullName evidence="7">Thioredoxin-dependent peroxiredoxin 1</fullName>
    </alternativeName>
</protein>
<reference key="1">
    <citation type="journal article" date="2003" name="Biochem. J.">
        <title>Identification of galectin I and thioredoxin peroxidase II as two arsenic-binding proteins in Chinese hamster ovary cells.</title>
        <authorList>
            <person name="Chang K.N."/>
            <person name="Lee T.C."/>
            <person name="Tam M.F."/>
            <person name="Chen Y.C."/>
            <person name="Lee L.W."/>
            <person name="Lee S.Y."/>
            <person name="Lin P.J."/>
            <person name="Huang R.N."/>
        </authorList>
    </citation>
    <scope>NUCLEOTIDE SEQUENCE [MRNA]</scope>
    <scope>PARTIAL PROTEIN SEQUENCE</scope>
    <scope>INDUCTION</scope>
    <source>
        <tissue>Ovary</tissue>
    </source>
</reference>
<sequence>MSSGNAKIGYPAPNFKATAVMPDGQFRDICLSEYRGKYVVFFFYPLDFTFVCPTEIIAFSDRAEEFKKLNCQVIGASVDSHFCHLAWINTPKKQGGLGPMNIPLVSDPKRTIAQDYGVLKADEGISFRGLFIIDDKGILRQITINDLPVGRSVDEILRLVQAFQFTDKHGEVCPAGWKPGSDTIKPDVQKSKEYFSKQK</sequence>
<organism>
    <name type="scientific">Cricetulus griseus</name>
    <name type="common">Chinese hamster</name>
    <name type="synonym">Cricetulus barabensis griseus</name>
    <dbReference type="NCBI Taxonomy" id="10029"/>
    <lineage>
        <taxon>Eukaryota</taxon>
        <taxon>Metazoa</taxon>
        <taxon>Chordata</taxon>
        <taxon>Craniata</taxon>
        <taxon>Vertebrata</taxon>
        <taxon>Euteleostomi</taxon>
        <taxon>Mammalia</taxon>
        <taxon>Eutheria</taxon>
        <taxon>Euarchontoglires</taxon>
        <taxon>Glires</taxon>
        <taxon>Rodentia</taxon>
        <taxon>Myomorpha</taxon>
        <taxon>Muroidea</taxon>
        <taxon>Cricetidae</taxon>
        <taxon>Cricetinae</taxon>
        <taxon>Cricetulus</taxon>
    </lineage>
</organism>
<accession>Q9JKY1</accession>
<gene>
    <name type="primary">PRDX1</name>
    <name type="synonym">TDPX2</name>
</gene>
<feature type="initiator methionine" description="Removed" evidence="3">
    <location>
        <position position="1"/>
    </location>
</feature>
<feature type="chain" id="PRO_0000256852" description="Peroxiredoxin-1">
    <location>
        <begin position="2"/>
        <end position="199"/>
    </location>
</feature>
<feature type="domain" description="Thioredoxin" evidence="4">
    <location>
        <begin position="6"/>
        <end position="165"/>
    </location>
</feature>
<feature type="region of interest" description="Disordered" evidence="5">
    <location>
        <begin position="176"/>
        <end position="199"/>
    </location>
</feature>
<feature type="compositionally biased region" description="Basic and acidic residues" evidence="5">
    <location>
        <begin position="184"/>
        <end position="199"/>
    </location>
</feature>
<feature type="active site" description="Cysteine sulfenic acid (-SOH) intermediate" evidence="3">
    <location>
        <position position="52"/>
    </location>
</feature>
<feature type="modified residue" description="N-acetylserine" evidence="3">
    <location>
        <position position="2"/>
    </location>
</feature>
<feature type="modified residue" description="N6-acetyllysine; alternate" evidence="3">
    <location>
        <position position="7"/>
    </location>
</feature>
<feature type="modified residue" description="N6-acetyllysine" evidence="3">
    <location>
        <position position="16"/>
    </location>
</feature>
<feature type="modified residue" description="Phosphoserine" evidence="3">
    <location>
        <position position="32"/>
    </location>
</feature>
<feature type="modified residue" description="Phosphothreonine" evidence="3">
    <location>
        <position position="90"/>
    </location>
</feature>
<feature type="modified residue" description="N6-acetyllysine" evidence="2">
    <location>
        <position position="136"/>
    </location>
</feature>
<feature type="modified residue" description="N6-acetyllysine" evidence="3">
    <location>
        <position position="197"/>
    </location>
</feature>
<feature type="disulfide bond" description="Interchain (with C-173); in linked form" evidence="3">
    <location>
        <position position="52"/>
    </location>
</feature>
<feature type="disulfide bond" description="Interchain (with C-52); in linked form" evidence="3">
    <location>
        <position position="173"/>
    </location>
</feature>
<feature type="cross-link" description="Glycyl lysine isopeptide (Lys-Gly) (interchain with G-Cter in SUMO2); alternate" evidence="3">
    <location>
        <position position="7"/>
    </location>
</feature>
<feature type="cross-link" description="Glycyl lysine isopeptide (Lys-Gly) (interchain with G-Cter in SUMO2)" evidence="3">
    <location>
        <position position="120"/>
    </location>
</feature>
<feature type="cross-link" description="Glycyl lysine isopeptide (Lys-Gly) (interchain with G-Cter in SUMO1)" evidence="3">
    <location>
        <position position="185"/>
    </location>
</feature>
<evidence type="ECO:0000250" key="1">
    <source>
        <dbReference type="UniProtKB" id="P0CB50"/>
    </source>
</evidence>
<evidence type="ECO:0000250" key="2">
    <source>
        <dbReference type="UniProtKB" id="P35700"/>
    </source>
</evidence>
<evidence type="ECO:0000250" key="3">
    <source>
        <dbReference type="UniProtKB" id="Q06830"/>
    </source>
</evidence>
<evidence type="ECO:0000255" key="4">
    <source>
        <dbReference type="PROSITE-ProRule" id="PRU00691"/>
    </source>
</evidence>
<evidence type="ECO:0000256" key="5">
    <source>
        <dbReference type="SAM" id="MobiDB-lite"/>
    </source>
</evidence>
<evidence type="ECO:0000269" key="6">
    <source>
    </source>
</evidence>
<evidence type="ECO:0000305" key="7"/>
<keyword id="KW-0007">Acetylation</keyword>
<keyword id="KW-0049">Antioxidant</keyword>
<keyword id="KW-0963">Cytoplasm</keyword>
<keyword id="KW-0903">Direct protein sequencing</keyword>
<keyword id="KW-1015">Disulfide bond</keyword>
<keyword id="KW-1017">Isopeptide bond</keyword>
<keyword id="KW-0560">Oxidoreductase</keyword>
<keyword id="KW-0575">Peroxidase</keyword>
<keyword id="KW-0597">Phosphoprotein</keyword>
<keyword id="KW-0676">Redox-active center</keyword>
<keyword id="KW-0832">Ubl conjugation</keyword>